<evidence type="ECO:0000250" key="1">
    <source>
        <dbReference type="UniProtKB" id="Q9NRC1"/>
    </source>
</evidence>
<evidence type="ECO:0000255" key="2"/>
<evidence type="ECO:0000305" key="3"/>
<accession>Q2IBE0</accession>
<gene>
    <name type="primary">ST7</name>
</gene>
<feature type="chain" id="PRO_0000339213" description="Suppressor of tumorigenicity 7 protein">
    <location>
        <begin position="1"/>
        <end position="585"/>
    </location>
</feature>
<feature type="transmembrane region" description="Helical" evidence="2">
    <location>
        <begin position="15"/>
        <end position="35"/>
    </location>
</feature>
<feature type="transmembrane region" description="Helical" evidence="2">
    <location>
        <begin position="62"/>
        <end position="82"/>
    </location>
</feature>
<feature type="transmembrane region" description="Helical" evidence="2">
    <location>
        <begin position="512"/>
        <end position="532"/>
    </location>
</feature>
<feature type="modified residue" description="Phosphoserine" evidence="1">
    <location>
        <position position="386"/>
    </location>
</feature>
<feature type="glycosylation site" description="N-linked (GlcNAc...) asparagine" evidence="2">
    <location>
        <position position="47"/>
    </location>
</feature>
<name>ST7_PONAB</name>
<keyword id="KW-0325">Glycoprotein</keyword>
<keyword id="KW-0472">Membrane</keyword>
<keyword id="KW-0597">Phosphoprotein</keyword>
<keyword id="KW-1185">Reference proteome</keyword>
<keyword id="KW-0812">Transmembrane</keyword>
<keyword id="KW-1133">Transmembrane helix</keyword>
<reference key="1">
    <citation type="submission" date="2006-12" db="EMBL/GenBank/DDBJ databases">
        <title>NISC comparative sequencing initiative.</title>
        <authorList>
            <person name="Antonellis A."/>
            <person name="Ayele K."/>
            <person name="Benjamin B."/>
            <person name="Blakesley R.W."/>
            <person name="Boakye A."/>
            <person name="Bouffard G.G."/>
            <person name="Brinkley C."/>
            <person name="Brooks S."/>
            <person name="Chu G."/>
            <person name="Coleman H."/>
            <person name="Engle J."/>
            <person name="Gestole M."/>
            <person name="Greene A."/>
            <person name="Guan X."/>
            <person name="Gupta J."/>
            <person name="Haghighi P."/>
            <person name="Han J."/>
            <person name="Hansen N."/>
            <person name="Ho S.-L."/>
            <person name="Hu P."/>
            <person name="Hunter G."/>
            <person name="Hurle B."/>
            <person name="Idol J.R."/>
            <person name="Kwong P."/>
            <person name="Laric P."/>
            <person name="Larson S."/>
            <person name="Lee-Lin S.-Q."/>
            <person name="Legaspi R."/>
            <person name="Madden M."/>
            <person name="Maduro Q.L."/>
            <person name="Maduro V.B."/>
            <person name="Margulies E.H."/>
            <person name="Masiello C."/>
            <person name="Maskeri B."/>
            <person name="McDowell J."/>
            <person name="Mojidi H.A."/>
            <person name="Mullikin J.C."/>
            <person name="Oestreicher J.S."/>
            <person name="Park M."/>
            <person name="Portnoy M.E."/>
            <person name="Prasad A."/>
            <person name="Puri O."/>
            <person name="Reddix-Dugue N."/>
            <person name="Schandler K."/>
            <person name="Schueler M.G."/>
            <person name="Sison C."/>
            <person name="Stantripop S."/>
            <person name="Stephen E."/>
            <person name="Taye A."/>
            <person name="Thomas J.W."/>
            <person name="Thomas P.J."/>
            <person name="Tsipouri V."/>
            <person name="Ung L."/>
            <person name="Vogt J.L."/>
            <person name="Wetherby K.D."/>
            <person name="Young A."/>
            <person name="Green E.D."/>
        </authorList>
    </citation>
    <scope>NUCLEOTIDE SEQUENCE [LARGE SCALE GENOMIC DNA]</scope>
</reference>
<organism>
    <name type="scientific">Pongo abelii</name>
    <name type="common">Sumatran orangutan</name>
    <name type="synonym">Pongo pygmaeus abelii</name>
    <dbReference type="NCBI Taxonomy" id="9601"/>
    <lineage>
        <taxon>Eukaryota</taxon>
        <taxon>Metazoa</taxon>
        <taxon>Chordata</taxon>
        <taxon>Craniata</taxon>
        <taxon>Vertebrata</taxon>
        <taxon>Euteleostomi</taxon>
        <taxon>Mammalia</taxon>
        <taxon>Eutheria</taxon>
        <taxon>Euarchontoglires</taxon>
        <taxon>Primates</taxon>
        <taxon>Haplorrhini</taxon>
        <taxon>Catarrhini</taxon>
        <taxon>Hominidae</taxon>
        <taxon>Pongo</taxon>
    </lineage>
</organism>
<proteinExistence type="inferred from homology"/>
<comment type="subcellular location">
    <subcellularLocation>
        <location evidence="3">Membrane</location>
        <topology evidence="3">Multi-pass membrane protein</topology>
    </subcellularLocation>
</comment>
<comment type="similarity">
    <text evidence="3">Belongs to the ST7 family.</text>
</comment>
<sequence length="585" mass="67188">MAEAATGFLEQLKSCIVWSWTYLWTVWFFIVLFLVYILRVPLKINDNLSTVSMFLNTLTPKFYVALTGTSSLISGLILIFEWWYFRKYGTSFIEQVSVSHLRPLLGGVDNNSSNNSNSSNGDSDSNRQSVSECKVWRNPLNLFRGAEYNRYTWVTGREPLTYYDMNLSAQDHQTFFTCDSDHLRPADAIMQKAWRERNPQARISAAHEALEINEIRSRVEVPLIASSTIWEIKLLPKCATAYILLAEEEATTIAEAEKLFKQALKAGDGCYRRSQQLQHHGSQYEAQHRRDTNVLVYIKRRLAMCARRLGRTREAVKMMRDLMKEFPLLSMFNIHENLLEALLELQAYADVQAVLAKYDDISLPKSATICYTAALLKARAVSDKFSPEAASRRGLSTAEMNAVEAIHRAVEFNPHVPKYLLEMKSLILPPEHILKRGDSEAIAYAFFHLAHWKRVEGALNLLHCTWEGTFRMIPYPLEKGHLFYPYPICTETADRELLPSFHEVSVYPKKELPFFILFTAGLCSFTAMLALLTHQFPELMGVFAKAMIDIFCSAEFRHWNCKSIFMRVEDELEIPPAPQSQHFQN</sequence>
<protein>
    <recommendedName>
        <fullName>Suppressor of tumorigenicity 7 protein</fullName>
    </recommendedName>
</protein>
<dbReference type="EMBL" id="DP000026">
    <property type="protein sequence ID" value="ABC87463.1"/>
    <property type="molecule type" value="Genomic_DNA"/>
</dbReference>
<dbReference type="RefSeq" id="XP_024105141.1">
    <property type="nucleotide sequence ID" value="XM_024249373.3"/>
</dbReference>
<dbReference type="FunCoup" id="Q2IBE0">
    <property type="interactions" value="1367"/>
</dbReference>
<dbReference type="STRING" id="9601.ENSPPYP00000020108"/>
<dbReference type="GlyCosmos" id="Q2IBE0">
    <property type="glycosylation" value="1 site, No reported glycans"/>
</dbReference>
<dbReference type="Ensembl" id="ENSPPYT00000054234.1">
    <property type="protein sequence ID" value="ENSPPYP00000039707.1"/>
    <property type="gene ID" value="ENSPPYG00000017934.3"/>
</dbReference>
<dbReference type="GeneID" id="100174518"/>
<dbReference type="eggNOG" id="KOG3807">
    <property type="taxonomic scope" value="Eukaryota"/>
</dbReference>
<dbReference type="GeneTree" id="ENSGT00390000000873"/>
<dbReference type="InParanoid" id="Q2IBE0"/>
<dbReference type="OMA" id="DRCATAY"/>
<dbReference type="OrthoDB" id="5914722at2759"/>
<dbReference type="Proteomes" id="UP000001595">
    <property type="component" value="Chromosome 7"/>
</dbReference>
<dbReference type="GO" id="GO:0016020">
    <property type="term" value="C:membrane"/>
    <property type="evidence" value="ECO:0007669"/>
    <property type="project" value="UniProtKB-SubCell"/>
</dbReference>
<dbReference type="CDD" id="cd11557">
    <property type="entry name" value="ST7"/>
    <property type="match status" value="1"/>
</dbReference>
<dbReference type="InterPro" id="IPR007311">
    <property type="entry name" value="ST7"/>
</dbReference>
<dbReference type="PANTHER" id="PTHR12745">
    <property type="entry name" value="SUPPRESSION OF TUMORIGENICITY 7"/>
    <property type="match status" value="1"/>
</dbReference>
<dbReference type="PANTHER" id="PTHR12745:SF10">
    <property type="entry name" value="SUPPRESSOR OF TUMORIGENICITY 7 PROTEIN"/>
    <property type="match status" value="1"/>
</dbReference>
<dbReference type="Pfam" id="PF04184">
    <property type="entry name" value="ST7"/>
    <property type="match status" value="1"/>
</dbReference>